<gene>
    <name evidence="1" type="primary">hslU</name>
    <name type="ordered locus">CTN_0149</name>
</gene>
<evidence type="ECO:0000255" key="1">
    <source>
        <dbReference type="HAMAP-Rule" id="MF_00249"/>
    </source>
</evidence>
<feature type="chain" id="PRO_1000125452" description="ATP-dependent protease ATPase subunit HslU">
    <location>
        <begin position="1"/>
        <end position="463"/>
    </location>
</feature>
<feature type="binding site" evidence="1">
    <location>
        <position position="21"/>
    </location>
    <ligand>
        <name>ATP</name>
        <dbReference type="ChEBI" id="CHEBI:30616"/>
    </ligand>
</feature>
<feature type="binding site" evidence="1">
    <location>
        <begin position="63"/>
        <end position="68"/>
    </location>
    <ligand>
        <name>ATP</name>
        <dbReference type="ChEBI" id="CHEBI:30616"/>
    </ligand>
</feature>
<feature type="binding site" evidence="1">
    <location>
        <position position="276"/>
    </location>
    <ligand>
        <name>ATP</name>
        <dbReference type="ChEBI" id="CHEBI:30616"/>
    </ligand>
</feature>
<feature type="binding site" evidence="1">
    <location>
        <position position="341"/>
    </location>
    <ligand>
        <name>ATP</name>
        <dbReference type="ChEBI" id="CHEBI:30616"/>
    </ligand>
</feature>
<feature type="binding site" evidence="1">
    <location>
        <position position="413"/>
    </location>
    <ligand>
        <name>ATP</name>
        <dbReference type="ChEBI" id="CHEBI:30616"/>
    </ligand>
</feature>
<name>HSLU_THENN</name>
<organism>
    <name type="scientific">Thermotoga neapolitana (strain ATCC 49049 / DSM 4359 / NBRC 107923 / NS-E)</name>
    <dbReference type="NCBI Taxonomy" id="309803"/>
    <lineage>
        <taxon>Bacteria</taxon>
        <taxon>Thermotogati</taxon>
        <taxon>Thermotogota</taxon>
        <taxon>Thermotogae</taxon>
        <taxon>Thermotogales</taxon>
        <taxon>Thermotogaceae</taxon>
        <taxon>Thermotoga</taxon>
    </lineage>
</organism>
<accession>B9KBC9</accession>
<keyword id="KW-0067">ATP-binding</keyword>
<keyword id="KW-0143">Chaperone</keyword>
<keyword id="KW-0963">Cytoplasm</keyword>
<keyword id="KW-0547">Nucleotide-binding</keyword>
<comment type="function">
    <text evidence="1">ATPase subunit of a proteasome-like degradation complex; this subunit has chaperone activity. The binding of ATP and its subsequent hydrolysis by HslU are essential for unfolding of protein substrates subsequently hydrolyzed by HslV. HslU recognizes the N-terminal part of its protein substrates and unfolds these before they are guided to HslV for hydrolysis.</text>
</comment>
<comment type="subunit">
    <text evidence="1">A double ring-shaped homohexamer of HslV is capped on each side by a ring-shaped HslU homohexamer. The assembly of the HslU/HslV complex is dependent on binding of ATP.</text>
</comment>
<comment type="subcellular location">
    <subcellularLocation>
        <location evidence="1">Cytoplasm</location>
    </subcellularLocation>
</comment>
<comment type="similarity">
    <text evidence="1">Belongs to the ClpX chaperone family. HslU subfamily.</text>
</comment>
<protein>
    <recommendedName>
        <fullName evidence="1">ATP-dependent protease ATPase subunit HslU</fullName>
    </recommendedName>
    <alternativeName>
        <fullName evidence="1">Unfoldase HslU</fullName>
    </alternativeName>
</protein>
<sequence length="463" mass="53040">MKSFDEMTPKEIVRELDKYIVGQTEAKKAVAIAVRNRIRRQKLPEEWRKEVLPKNILMIGPTGVGKTEIARRLAQLSGSPFLKVEATRFTEVGYVGKNVDSMIRDLVEISVNMVKQEKMKEVEERAKELVEERILDALVPESRAVPAITNPFINLITGGQQQQYTPEDRRRFRAKREEMRERLRRGELEDEEIEVEIEETASPFMGIFGPGMEDLGIEISNMFSGMLPKRKKKRKMKVSEARKVLLPMEAEKLIDMDKVIQEALDRAQNRGIIFIDEIDKIAGKESASGPDVSRQGVQRDLLPIVEGTTIMTKYGPVRTDYILFIAAGAFHVSRPSDLIPELQGRFPIRVELSPLTEEDFVRILKEPENAIIKQYQALLSTEGVELVFTEDGIREMARIAYQLNQRLENIGARRLYTVAEKVLEEISFEAPDIPEKKVVIDAEYVRKRLERIVQDEDLSAYIL</sequence>
<proteinExistence type="inferred from homology"/>
<reference key="1">
    <citation type="submission" date="2007-11" db="EMBL/GenBank/DDBJ databases">
        <title>The genome sequence of the hyperthermophilic bacterium Thermotoga neapolitana.</title>
        <authorList>
            <person name="Lim S.K."/>
            <person name="Kim J.S."/>
            <person name="Cha S.H."/>
            <person name="Park B.C."/>
            <person name="Lee D.S."/>
            <person name="Tae H.S."/>
            <person name="Kim S.-J."/>
            <person name="Kim J.J."/>
            <person name="Park K.J."/>
            <person name="Lee S.Y."/>
        </authorList>
    </citation>
    <scope>NUCLEOTIDE SEQUENCE [LARGE SCALE GENOMIC DNA]</scope>
    <source>
        <strain>ATCC 49049 / DSM 4359 / NBRC 107923 / NS-E</strain>
    </source>
</reference>
<dbReference type="EMBL" id="CP000916">
    <property type="protein sequence ID" value="ACM22325.1"/>
    <property type="molecule type" value="Genomic_DNA"/>
</dbReference>
<dbReference type="RefSeq" id="WP_012645035.1">
    <property type="nucleotide sequence ID" value="NC_011978.1"/>
</dbReference>
<dbReference type="SMR" id="B9KBC9"/>
<dbReference type="STRING" id="309803.CTN_0149"/>
<dbReference type="KEGG" id="tna:CTN_0149"/>
<dbReference type="eggNOG" id="COG1220">
    <property type="taxonomic scope" value="Bacteria"/>
</dbReference>
<dbReference type="HOGENOM" id="CLU_033123_0_0_0"/>
<dbReference type="Proteomes" id="UP000000445">
    <property type="component" value="Chromosome"/>
</dbReference>
<dbReference type="GO" id="GO:0009376">
    <property type="term" value="C:HslUV protease complex"/>
    <property type="evidence" value="ECO:0007669"/>
    <property type="project" value="UniProtKB-UniRule"/>
</dbReference>
<dbReference type="GO" id="GO:0005524">
    <property type="term" value="F:ATP binding"/>
    <property type="evidence" value="ECO:0007669"/>
    <property type="project" value="UniProtKB-UniRule"/>
</dbReference>
<dbReference type="GO" id="GO:0016887">
    <property type="term" value="F:ATP hydrolysis activity"/>
    <property type="evidence" value="ECO:0007669"/>
    <property type="project" value="InterPro"/>
</dbReference>
<dbReference type="GO" id="GO:0008233">
    <property type="term" value="F:peptidase activity"/>
    <property type="evidence" value="ECO:0007669"/>
    <property type="project" value="InterPro"/>
</dbReference>
<dbReference type="GO" id="GO:0036402">
    <property type="term" value="F:proteasome-activating activity"/>
    <property type="evidence" value="ECO:0007669"/>
    <property type="project" value="UniProtKB-UniRule"/>
</dbReference>
<dbReference type="GO" id="GO:0043335">
    <property type="term" value="P:protein unfolding"/>
    <property type="evidence" value="ECO:0007669"/>
    <property type="project" value="UniProtKB-UniRule"/>
</dbReference>
<dbReference type="GO" id="GO:0051603">
    <property type="term" value="P:proteolysis involved in protein catabolic process"/>
    <property type="evidence" value="ECO:0007669"/>
    <property type="project" value="TreeGrafter"/>
</dbReference>
<dbReference type="CDD" id="cd19498">
    <property type="entry name" value="RecA-like_HslU"/>
    <property type="match status" value="1"/>
</dbReference>
<dbReference type="FunFam" id="3.40.50.300:FF:000220">
    <property type="entry name" value="ATP-dependent protease ATPase subunit HslU"/>
    <property type="match status" value="1"/>
</dbReference>
<dbReference type="Gene3D" id="1.10.8.60">
    <property type="match status" value="1"/>
</dbReference>
<dbReference type="Gene3D" id="3.40.50.300">
    <property type="entry name" value="P-loop containing nucleotide triphosphate hydrolases"/>
    <property type="match status" value="2"/>
</dbReference>
<dbReference type="HAMAP" id="MF_00249">
    <property type="entry name" value="HslU"/>
    <property type="match status" value="1"/>
</dbReference>
<dbReference type="InterPro" id="IPR003593">
    <property type="entry name" value="AAA+_ATPase"/>
</dbReference>
<dbReference type="InterPro" id="IPR050052">
    <property type="entry name" value="ATP-dep_Clp_protease_ClpX"/>
</dbReference>
<dbReference type="InterPro" id="IPR003959">
    <property type="entry name" value="ATPase_AAA_core"/>
</dbReference>
<dbReference type="InterPro" id="IPR019489">
    <property type="entry name" value="Clp_ATPase_C"/>
</dbReference>
<dbReference type="InterPro" id="IPR004491">
    <property type="entry name" value="HslU"/>
</dbReference>
<dbReference type="InterPro" id="IPR027417">
    <property type="entry name" value="P-loop_NTPase"/>
</dbReference>
<dbReference type="NCBIfam" id="TIGR00390">
    <property type="entry name" value="hslU"/>
    <property type="match status" value="1"/>
</dbReference>
<dbReference type="NCBIfam" id="NF003544">
    <property type="entry name" value="PRK05201.1"/>
    <property type="match status" value="1"/>
</dbReference>
<dbReference type="PANTHER" id="PTHR48102">
    <property type="entry name" value="ATP-DEPENDENT CLP PROTEASE ATP-BINDING SUBUNIT CLPX-LIKE, MITOCHONDRIAL-RELATED"/>
    <property type="match status" value="1"/>
</dbReference>
<dbReference type="PANTHER" id="PTHR48102:SF3">
    <property type="entry name" value="ATP-DEPENDENT PROTEASE ATPASE SUBUNIT HSLU"/>
    <property type="match status" value="1"/>
</dbReference>
<dbReference type="Pfam" id="PF00004">
    <property type="entry name" value="AAA"/>
    <property type="match status" value="1"/>
</dbReference>
<dbReference type="Pfam" id="PF07724">
    <property type="entry name" value="AAA_2"/>
    <property type="match status" value="1"/>
</dbReference>
<dbReference type="SMART" id="SM00382">
    <property type="entry name" value="AAA"/>
    <property type="match status" value="1"/>
</dbReference>
<dbReference type="SMART" id="SM01086">
    <property type="entry name" value="ClpB_D2-small"/>
    <property type="match status" value="1"/>
</dbReference>
<dbReference type="SUPFAM" id="SSF52540">
    <property type="entry name" value="P-loop containing nucleoside triphosphate hydrolases"/>
    <property type="match status" value="1"/>
</dbReference>